<sequence>MLDKNQLAKYKQDHLCEYEKIMSNNEKEALEEKVASLDLDFIAKLYNDLYINKKTIDDVSAVSEVKYDIKSQMSDDEIKRLEEQGLQAIKEGQFAVLLMAGGQGTRLGYKGPKGSFEIEGVSLFELQANQLKTLNHQSGHTIQWYIMTSDINHEETLAYFEAHSYFGYDQEAIHFFKQDNIVALSEEGKLILNQQGRIMETPNGNGGVFKSLDKAGYLEEMSNNGVKYIFLNNIDNVLVKVLDPLFAGFTVEHDYDITSKTIQPKPGESVGRLVNVDCKDTVLEYSELDPEVANQFNNANIGIHAFKLGFILNAVNRELPYHLAIKNLKQLDENFGVIEQPTLKFELFYFDIFTYGTSFVTLQVPREEEFSPLKNKEGKDSVATATEDLRRMGLI</sequence>
<name>URTF_STAAS</name>
<keyword id="KW-0548">Nucleotidyltransferase</keyword>
<keyword id="KW-0808">Transferase</keyword>
<gene>
    <name type="ordered locus">SAS2072</name>
</gene>
<reference key="1">
    <citation type="journal article" date="2004" name="Proc. Natl. Acad. Sci. U.S.A.">
        <title>Complete genomes of two clinical Staphylococcus aureus strains: evidence for the rapid evolution of virulence and drug resistance.</title>
        <authorList>
            <person name="Holden M.T.G."/>
            <person name="Feil E.J."/>
            <person name="Lindsay J.A."/>
            <person name="Peacock S.J."/>
            <person name="Day N.P.J."/>
            <person name="Enright M.C."/>
            <person name="Foster T.J."/>
            <person name="Moore C.E."/>
            <person name="Hurst L."/>
            <person name="Atkin R."/>
            <person name="Barron A."/>
            <person name="Bason N."/>
            <person name="Bentley S.D."/>
            <person name="Chillingworth C."/>
            <person name="Chillingworth T."/>
            <person name="Churcher C."/>
            <person name="Clark L."/>
            <person name="Corton C."/>
            <person name="Cronin A."/>
            <person name="Doggett J."/>
            <person name="Dowd L."/>
            <person name="Feltwell T."/>
            <person name="Hance Z."/>
            <person name="Harris B."/>
            <person name="Hauser H."/>
            <person name="Holroyd S."/>
            <person name="Jagels K."/>
            <person name="James K.D."/>
            <person name="Lennard N."/>
            <person name="Line A."/>
            <person name="Mayes R."/>
            <person name="Moule S."/>
            <person name="Mungall K."/>
            <person name="Ormond D."/>
            <person name="Quail M.A."/>
            <person name="Rabbinowitsch E."/>
            <person name="Rutherford K.M."/>
            <person name="Sanders M."/>
            <person name="Sharp S."/>
            <person name="Simmonds M."/>
            <person name="Stevens K."/>
            <person name="Whitehead S."/>
            <person name="Barrell B.G."/>
            <person name="Spratt B.G."/>
            <person name="Parkhill J."/>
        </authorList>
    </citation>
    <scope>NUCLEOTIDE SEQUENCE [LARGE SCALE GENOMIC DNA]</scope>
    <source>
        <strain>MSSA476</strain>
    </source>
</reference>
<protein>
    <recommendedName>
        <fullName>Probable uridylyltransferase SAS2072</fullName>
        <ecNumber>2.7.7.-</ecNumber>
    </recommendedName>
</protein>
<dbReference type="EC" id="2.7.7.-"/>
<dbReference type="EMBL" id="BX571857">
    <property type="protein sequence ID" value="CAG43880.1"/>
    <property type="molecule type" value="Genomic_DNA"/>
</dbReference>
<dbReference type="RefSeq" id="WP_000884735.1">
    <property type="nucleotide sequence ID" value="NC_002953.3"/>
</dbReference>
<dbReference type="SMR" id="Q6G7E3"/>
<dbReference type="KEGG" id="sas:SAS2072"/>
<dbReference type="HOGENOM" id="CLU_025603_1_2_9"/>
<dbReference type="GO" id="GO:0070569">
    <property type="term" value="F:uridylyltransferase activity"/>
    <property type="evidence" value="ECO:0007669"/>
    <property type="project" value="InterPro"/>
</dbReference>
<dbReference type="CDD" id="cd04193">
    <property type="entry name" value="UDPGlcNAc_PPase"/>
    <property type="match status" value="1"/>
</dbReference>
<dbReference type="Gene3D" id="3.90.550.10">
    <property type="entry name" value="Spore Coat Polysaccharide Biosynthesis Protein SpsA, Chain A"/>
    <property type="match status" value="1"/>
</dbReference>
<dbReference type="InterPro" id="IPR029044">
    <property type="entry name" value="Nucleotide-diphossugar_trans"/>
</dbReference>
<dbReference type="InterPro" id="IPR039741">
    <property type="entry name" value="UDP-sugar_pyrophosphorylase"/>
</dbReference>
<dbReference type="InterPro" id="IPR002618">
    <property type="entry name" value="UDPGP_fam"/>
</dbReference>
<dbReference type="PANTHER" id="PTHR11952:SF2">
    <property type="entry name" value="LD24639P"/>
    <property type="match status" value="1"/>
</dbReference>
<dbReference type="PANTHER" id="PTHR11952">
    <property type="entry name" value="UDP- GLUCOSE PYROPHOSPHORYLASE"/>
    <property type="match status" value="1"/>
</dbReference>
<dbReference type="Pfam" id="PF01704">
    <property type="entry name" value="UDPGP"/>
    <property type="match status" value="1"/>
</dbReference>
<dbReference type="SUPFAM" id="SSF53448">
    <property type="entry name" value="Nucleotide-diphospho-sugar transferases"/>
    <property type="match status" value="1"/>
</dbReference>
<comment type="similarity">
    <text evidence="2">Belongs to the UDPGP type 1 family.</text>
</comment>
<feature type="chain" id="PRO_0000271313" description="Probable uridylyltransferase SAS2072">
    <location>
        <begin position="1"/>
        <end position="395"/>
    </location>
</feature>
<feature type="binding site" evidence="1">
    <location>
        <begin position="99"/>
        <end position="102"/>
    </location>
    <ligand>
        <name>UTP</name>
        <dbReference type="ChEBI" id="CHEBI:46398"/>
    </ligand>
</feature>
<feature type="binding site" evidence="1">
    <location>
        <position position="113"/>
    </location>
    <ligand>
        <name>UTP</name>
        <dbReference type="ChEBI" id="CHEBI:46398"/>
    </ligand>
</feature>
<feature type="binding site" evidence="1">
    <location>
        <position position="178"/>
    </location>
    <ligand>
        <name>UTP</name>
        <dbReference type="ChEBI" id="CHEBI:46398"/>
    </ligand>
</feature>
<feature type="binding site" evidence="1">
    <location>
        <position position="204"/>
    </location>
    <ligand>
        <name>UTP</name>
        <dbReference type="ChEBI" id="CHEBI:46398"/>
    </ligand>
</feature>
<feature type="binding site" evidence="1">
    <location>
        <position position="235"/>
    </location>
    <ligand>
        <name>UTP</name>
        <dbReference type="ChEBI" id="CHEBI:46398"/>
    </ligand>
</feature>
<feature type="binding site" evidence="1">
    <location>
        <position position="344"/>
    </location>
    <ligand>
        <name>UTP</name>
        <dbReference type="ChEBI" id="CHEBI:46398"/>
    </ligand>
</feature>
<evidence type="ECO:0000250" key="1">
    <source>
        <dbReference type="UniProtKB" id="Q9M9P3"/>
    </source>
</evidence>
<evidence type="ECO:0000305" key="2"/>
<accession>Q6G7E3</accession>
<proteinExistence type="inferred from homology"/>
<organism>
    <name type="scientific">Staphylococcus aureus (strain MSSA476)</name>
    <dbReference type="NCBI Taxonomy" id="282459"/>
    <lineage>
        <taxon>Bacteria</taxon>
        <taxon>Bacillati</taxon>
        <taxon>Bacillota</taxon>
        <taxon>Bacilli</taxon>
        <taxon>Bacillales</taxon>
        <taxon>Staphylococcaceae</taxon>
        <taxon>Staphylococcus</taxon>
    </lineage>
</organism>